<sequence>MLASACTHSWRTGRFLNRIIKSSVQTLTAAALIANLSACSRPTTLEKIEQEGALHVITRNAPTTYYEDRDGPAGFEYELAKKFSEYLGVELRLRVANDLDEAYTVLEQNYTNLAAVGLSRLAASAQSPSLRFSSEYLEIQPLVLYRNGSAKPKQLDDLIGGKLIIPAQTAQAEFLRQVKDSRLPDMDWLEAADMETSEIMRLIEEGEYEYAIVNSREYEIHKAMFPRAREAFSLMEPLQISWIFPPGEDMSLIQKADEFIKQIKDDGTLIYLQERYFGHVNQLNYVGARTYISHIKDRLPKFEPTFKQAAEKFEVDWRLLASIGYQESHWRPYATSPTGVRGLMMLTLPTAKEMNVKNRLNPEQSIFGGAGYFSRIKQRISERITEPDRTWMALAAYNVGLGHLEDARALAKAQGLDQDKWIDVKQALPLLQQKKWYVKTRYGYARGWEPVHYVQNIRRYYDVLVWMTQPSAEDGSVAQNEDAPTTGADGTTEETPAIPAPFRVTPPML</sequence>
<gene>
    <name evidence="1" type="primary">mltF</name>
    <name type="ordered locus">HCH_02190</name>
</gene>
<reference key="1">
    <citation type="journal article" date="2005" name="Nucleic Acids Res.">
        <title>Genomic blueprint of Hahella chejuensis, a marine microbe producing an algicidal agent.</title>
        <authorList>
            <person name="Jeong H."/>
            <person name="Yim J.H."/>
            <person name="Lee C."/>
            <person name="Choi S.-H."/>
            <person name="Park Y.K."/>
            <person name="Yoon S.H."/>
            <person name="Hur C.-G."/>
            <person name="Kang H.-Y."/>
            <person name="Kim D."/>
            <person name="Lee H.H."/>
            <person name="Park K.H."/>
            <person name="Park S.-H."/>
            <person name="Park H.-S."/>
            <person name="Lee H.K."/>
            <person name="Oh T.K."/>
            <person name="Kim J.F."/>
        </authorList>
    </citation>
    <scope>NUCLEOTIDE SEQUENCE [LARGE SCALE GENOMIC DNA]</scope>
    <source>
        <strain>KCTC 2396</strain>
    </source>
</reference>
<feature type="signal peptide" evidence="1">
    <location>
        <begin position="1"/>
        <end position="40"/>
    </location>
</feature>
<feature type="chain" id="PRO_0000353945" description="Membrane-bound lytic murein transglycosylase F">
    <location>
        <begin position="41"/>
        <end position="509"/>
    </location>
</feature>
<feature type="region of interest" description="Non-LT domain" evidence="1">
    <location>
        <begin position="41"/>
        <end position="280"/>
    </location>
</feature>
<feature type="region of interest" description="LT domain" evidence="1">
    <location>
        <begin position="281"/>
        <end position="509"/>
    </location>
</feature>
<feature type="region of interest" description="Disordered" evidence="2">
    <location>
        <begin position="474"/>
        <end position="500"/>
    </location>
</feature>
<feature type="active site" evidence="1">
    <location>
        <position position="327"/>
    </location>
</feature>
<dbReference type="EC" id="4.2.2.n1" evidence="1"/>
<dbReference type="EMBL" id="CP000155">
    <property type="protein sequence ID" value="ABC29018.1"/>
    <property type="molecule type" value="Genomic_DNA"/>
</dbReference>
<dbReference type="RefSeq" id="WP_011396088.1">
    <property type="nucleotide sequence ID" value="NC_007645.1"/>
</dbReference>
<dbReference type="SMR" id="Q2SK06"/>
<dbReference type="STRING" id="349521.HCH_02190"/>
<dbReference type="CAZy" id="GH23">
    <property type="family name" value="Glycoside Hydrolase Family 23"/>
</dbReference>
<dbReference type="KEGG" id="hch:HCH_02190"/>
<dbReference type="eggNOG" id="COG4623">
    <property type="taxonomic scope" value="Bacteria"/>
</dbReference>
<dbReference type="HOGENOM" id="CLU_027494_0_1_6"/>
<dbReference type="OrthoDB" id="9815002at2"/>
<dbReference type="Proteomes" id="UP000000238">
    <property type="component" value="Chromosome"/>
</dbReference>
<dbReference type="GO" id="GO:0009279">
    <property type="term" value="C:cell outer membrane"/>
    <property type="evidence" value="ECO:0007669"/>
    <property type="project" value="UniProtKB-SubCell"/>
</dbReference>
<dbReference type="GO" id="GO:0008933">
    <property type="term" value="F:peptidoglycan lytic transglycosylase activity"/>
    <property type="evidence" value="ECO:0007669"/>
    <property type="project" value="UniProtKB-UniRule"/>
</dbReference>
<dbReference type="GO" id="GO:0016998">
    <property type="term" value="P:cell wall macromolecule catabolic process"/>
    <property type="evidence" value="ECO:0007669"/>
    <property type="project" value="UniProtKB-UniRule"/>
</dbReference>
<dbReference type="GO" id="GO:0071555">
    <property type="term" value="P:cell wall organization"/>
    <property type="evidence" value="ECO:0007669"/>
    <property type="project" value="UniProtKB-KW"/>
</dbReference>
<dbReference type="GO" id="GO:0009253">
    <property type="term" value="P:peptidoglycan catabolic process"/>
    <property type="evidence" value="ECO:0007669"/>
    <property type="project" value="TreeGrafter"/>
</dbReference>
<dbReference type="CDD" id="cd13403">
    <property type="entry name" value="MLTF-like"/>
    <property type="match status" value="1"/>
</dbReference>
<dbReference type="CDD" id="cd01009">
    <property type="entry name" value="PBP2_YfhD_N"/>
    <property type="match status" value="1"/>
</dbReference>
<dbReference type="Gene3D" id="1.10.530.10">
    <property type="match status" value="1"/>
</dbReference>
<dbReference type="Gene3D" id="3.40.190.10">
    <property type="entry name" value="Periplasmic binding protein-like II"/>
    <property type="match status" value="2"/>
</dbReference>
<dbReference type="HAMAP" id="MF_02016">
    <property type="entry name" value="MltF"/>
    <property type="match status" value="1"/>
</dbReference>
<dbReference type="InterPro" id="IPR023346">
    <property type="entry name" value="Lysozyme-like_dom_sf"/>
</dbReference>
<dbReference type="InterPro" id="IPR023703">
    <property type="entry name" value="MltF"/>
</dbReference>
<dbReference type="InterPro" id="IPR001638">
    <property type="entry name" value="Solute-binding_3/MltF_N"/>
</dbReference>
<dbReference type="InterPro" id="IPR000189">
    <property type="entry name" value="Transglyc_AS"/>
</dbReference>
<dbReference type="InterPro" id="IPR008258">
    <property type="entry name" value="Transglycosylase_SLT_dom_1"/>
</dbReference>
<dbReference type="NCBIfam" id="NF008112">
    <property type="entry name" value="PRK10859.1"/>
    <property type="match status" value="1"/>
</dbReference>
<dbReference type="PANTHER" id="PTHR35936">
    <property type="entry name" value="MEMBRANE-BOUND LYTIC MUREIN TRANSGLYCOSYLASE F"/>
    <property type="match status" value="1"/>
</dbReference>
<dbReference type="PANTHER" id="PTHR35936:SF32">
    <property type="entry name" value="MEMBRANE-BOUND LYTIC MUREIN TRANSGLYCOSYLASE F"/>
    <property type="match status" value="1"/>
</dbReference>
<dbReference type="Pfam" id="PF00497">
    <property type="entry name" value="SBP_bac_3"/>
    <property type="match status" value="1"/>
</dbReference>
<dbReference type="Pfam" id="PF01464">
    <property type="entry name" value="SLT"/>
    <property type="match status" value="1"/>
</dbReference>
<dbReference type="SMART" id="SM00062">
    <property type="entry name" value="PBPb"/>
    <property type="match status" value="1"/>
</dbReference>
<dbReference type="SUPFAM" id="SSF53955">
    <property type="entry name" value="Lysozyme-like"/>
    <property type="match status" value="1"/>
</dbReference>
<dbReference type="SUPFAM" id="SSF53850">
    <property type="entry name" value="Periplasmic binding protein-like II"/>
    <property type="match status" value="1"/>
</dbReference>
<dbReference type="PROSITE" id="PS00922">
    <property type="entry name" value="TRANSGLYCOSYLASE"/>
    <property type="match status" value="1"/>
</dbReference>
<protein>
    <recommendedName>
        <fullName evidence="1">Membrane-bound lytic murein transglycosylase F</fullName>
        <ecNumber evidence="1">4.2.2.n1</ecNumber>
    </recommendedName>
    <alternativeName>
        <fullName evidence="1">Murein lyase F</fullName>
    </alternativeName>
</protein>
<name>MLTF_HAHCH</name>
<proteinExistence type="inferred from homology"/>
<organism>
    <name type="scientific">Hahella chejuensis (strain KCTC 2396)</name>
    <dbReference type="NCBI Taxonomy" id="349521"/>
    <lineage>
        <taxon>Bacteria</taxon>
        <taxon>Pseudomonadati</taxon>
        <taxon>Pseudomonadota</taxon>
        <taxon>Gammaproteobacteria</taxon>
        <taxon>Oceanospirillales</taxon>
        <taxon>Hahellaceae</taxon>
        <taxon>Hahella</taxon>
    </lineage>
</organism>
<comment type="function">
    <text evidence="1">Murein-degrading enzyme that degrades murein glycan strands and insoluble, high-molecular weight murein sacculi, with the concomitant formation of a 1,6-anhydromuramoyl product. Lytic transglycosylases (LTs) play an integral role in the metabolism of the peptidoglycan (PG) sacculus. Their lytic action creates space within the PG sacculus to allow for its expansion as well as for the insertion of various structures such as secretion systems and flagella.</text>
</comment>
<comment type="catalytic activity">
    <reaction evidence="1">
        <text>Exolytic cleavage of the (1-&gt;4)-beta-glycosidic linkage between N-acetylmuramic acid (MurNAc) and N-acetylglucosamine (GlcNAc) residues in peptidoglycan, from either the reducing or the non-reducing ends of the peptidoglycan chains, with concomitant formation of a 1,6-anhydrobond in the MurNAc residue.</text>
        <dbReference type="EC" id="4.2.2.n1"/>
    </reaction>
</comment>
<comment type="subcellular location">
    <subcellularLocation>
        <location>Cell outer membrane</location>
        <topology>Peripheral membrane protein</topology>
    </subcellularLocation>
    <text evidence="1">Attached to the inner leaflet of the outer membrane.</text>
</comment>
<comment type="domain">
    <text evidence="1">The N-terminal domain does not have lytic activity and probably modulates enzymatic activity. The C-terminal domain is the catalytic active domain.</text>
</comment>
<comment type="similarity">
    <text evidence="1">In the N-terminal section; belongs to the bacterial solute-binding protein 3 family.</text>
</comment>
<comment type="similarity">
    <text evidence="1">In the C-terminal section; belongs to the transglycosylase Slt family.</text>
</comment>
<evidence type="ECO:0000255" key="1">
    <source>
        <dbReference type="HAMAP-Rule" id="MF_02016"/>
    </source>
</evidence>
<evidence type="ECO:0000256" key="2">
    <source>
        <dbReference type="SAM" id="MobiDB-lite"/>
    </source>
</evidence>
<accession>Q2SK06</accession>
<keyword id="KW-0998">Cell outer membrane</keyword>
<keyword id="KW-0961">Cell wall biogenesis/degradation</keyword>
<keyword id="KW-0456">Lyase</keyword>
<keyword id="KW-0472">Membrane</keyword>
<keyword id="KW-1185">Reference proteome</keyword>
<keyword id="KW-0732">Signal</keyword>